<comment type="similarity">
    <text evidence="1">Belongs to the universal ribosomal protein uS2 family.</text>
</comment>
<name>RS2_SALSV</name>
<feature type="chain" id="PRO_1000115057" description="Small ribosomal subunit protein uS2">
    <location>
        <begin position="1"/>
        <end position="241"/>
    </location>
</feature>
<organism>
    <name type="scientific">Salmonella schwarzengrund (strain CVM19633)</name>
    <dbReference type="NCBI Taxonomy" id="439843"/>
    <lineage>
        <taxon>Bacteria</taxon>
        <taxon>Pseudomonadati</taxon>
        <taxon>Pseudomonadota</taxon>
        <taxon>Gammaproteobacteria</taxon>
        <taxon>Enterobacterales</taxon>
        <taxon>Enterobacteriaceae</taxon>
        <taxon>Salmonella</taxon>
    </lineage>
</organism>
<evidence type="ECO:0000255" key="1">
    <source>
        <dbReference type="HAMAP-Rule" id="MF_00291"/>
    </source>
</evidence>
<evidence type="ECO:0000305" key="2"/>
<accession>B4TXS1</accession>
<reference key="1">
    <citation type="journal article" date="2011" name="J. Bacteriol.">
        <title>Comparative genomics of 28 Salmonella enterica isolates: evidence for CRISPR-mediated adaptive sublineage evolution.</title>
        <authorList>
            <person name="Fricke W.F."/>
            <person name="Mammel M.K."/>
            <person name="McDermott P.F."/>
            <person name="Tartera C."/>
            <person name="White D.G."/>
            <person name="Leclerc J.E."/>
            <person name="Ravel J."/>
            <person name="Cebula T.A."/>
        </authorList>
    </citation>
    <scope>NUCLEOTIDE SEQUENCE [LARGE SCALE GENOMIC DNA]</scope>
    <source>
        <strain>CVM19633</strain>
    </source>
</reference>
<gene>
    <name evidence="1" type="primary">rpsB</name>
    <name type="ordered locus">SeSA_A0241</name>
</gene>
<protein>
    <recommendedName>
        <fullName evidence="1">Small ribosomal subunit protein uS2</fullName>
    </recommendedName>
    <alternativeName>
        <fullName evidence="2">30S ribosomal protein S2</fullName>
    </alternativeName>
</protein>
<dbReference type="EMBL" id="CP001127">
    <property type="protein sequence ID" value="ACF90239.1"/>
    <property type="molecule type" value="Genomic_DNA"/>
</dbReference>
<dbReference type="RefSeq" id="WP_000246886.1">
    <property type="nucleotide sequence ID" value="NC_011094.1"/>
</dbReference>
<dbReference type="SMR" id="B4TXS1"/>
<dbReference type="KEGG" id="sew:SeSA_A0241"/>
<dbReference type="HOGENOM" id="CLU_040318_1_0_6"/>
<dbReference type="Proteomes" id="UP000001865">
    <property type="component" value="Chromosome"/>
</dbReference>
<dbReference type="GO" id="GO:0022627">
    <property type="term" value="C:cytosolic small ribosomal subunit"/>
    <property type="evidence" value="ECO:0007669"/>
    <property type="project" value="TreeGrafter"/>
</dbReference>
<dbReference type="GO" id="GO:0003735">
    <property type="term" value="F:structural constituent of ribosome"/>
    <property type="evidence" value="ECO:0007669"/>
    <property type="project" value="InterPro"/>
</dbReference>
<dbReference type="GO" id="GO:0006412">
    <property type="term" value="P:translation"/>
    <property type="evidence" value="ECO:0007669"/>
    <property type="project" value="UniProtKB-UniRule"/>
</dbReference>
<dbReference type="CDD" id="cd01425">
    <property type="entry name" value="RPS2"/>
    <property type="match status" value="1"/>
</dbReference>
<dbReference type="FunFam" id="1.10.287.610:FF:000001">
    <property type="entry name" value="30S ribosomal protein S2"/>
    <property type="match status" value="1"/>
</dbReference>
<dbReference type="Gene3D" id="3.40.50.10490">
    <property type="entry name" value="Glucose-6-phosphate isomerase like protein, domain 1"/>
    <property type="match status" value="1"/>
</dbReference>
<dbReference type="Gene3D" id="1.10.287.610">
    <property type="entry name" value="Helix hairpin bin"/>
    <property type="match status" value="1"/>
</dbReference>
<dbReference type="HAMAP" id="MF_00291_B">
    <property type="entry name" value="Ribosomal_uS2_B"/>
    <property type="match status" value="1"/>
</dbReference>
<dbReference type="InterPro" id="IPR001865">
    <property type="entry name" value="Ribosomal_uS2"/>
</dbReference>
<dbReference type="InterPro" id="IPR005706">
    <property type="entry name" value="Ribosomal_uS2_bac/mit/plastid"/>
</dbReference>
<dbReference type="InterPro" id="IPR018130">
    <property type="entry name" value="Ribosomal_uS2_CS"/>
</dbReference>
<dbReference type="InterPro" id="IPR023591">
    <property type="entry name" value="Ribosomal_uS2_flav_dom_sf"/>
</dbReference>
<dbReference type="NCBIfam" id="TIGR01011">
    <property type="entry name" value="rpsB_bact"/>
    <property type="match status" value="1"/>
</dbReference>
<dbReference type="PANTHER" id="PTHR12534">
    <property type="entry name" value="30S RIBOSOMAL PROTEIN S2 PROKARYOTIC AND ORGANELLAR"/>
    <property type="match status" value="1"/>
</dbReference>
<dbReference type="PANTHER" id="PTHR12534:SF0">
    <property type="entry name" value="SMALL RIBOSOMAL SUBUNIT PROTEIN US2M"/>
    <property type="match status" value="1"/>
</dbReference>
<dbReference type="Pfam" id="PF00318">
    <property type="entry name" value="Ribosomal_S2"/>
    <property type="match status" value="1"/>
</dbReference>
<dbReference type="PRINTS" id="PR00395">
    <property type="entry name" value="RIBOSOMALS2"/>
</dbReference>
<dbReference type="SUPFAM" id="SSF52313">
    <property type="entry name" value="Ribosomal protein S2"/>
    <property type="match status" value="1"/>
</dbReference>
<dbReference type="PROSITE" id="PS00962">
    <property type="entry name" value="RIBOSOMAL_S2_1"/>
    <property type="match status" value="1"/>
</dbReference>
<dbReference type="PROSITE" id="PS00963">
    <property type="entry name" value="RIBOSOMAL_S2_2"/>
    <property type="match status" value="1"/>
</dbReference>
<keyword id="KW-0687">Ribonucleoprotein</keyword>
<keyword id="KW-0689">Ribosomal protein</keyword>
<sequence length="241" mass="26759">MATVSMRDMLKAGVHFGHQTRYWNPKMKPFIFGARNKVHIINLEKTVPMFNEALAELNKISARKGKILFVGTKRAASEAVKEAANSCDQFFVNHRWLGGMLTNWKTVRQSIKRLKDLETQSQDGTFEKLTKKEALMRTRELEKLENSLGGIKDMGGLPDALFVIDADHEHIAIKEANNLGIPVFAIVDTNSDPDGVDFVIPGNDDAIRAVSLYLGAVAATVREGRSQDLASQAEESFVEAE</sequence>
<proteinExistence type="inferred from homology"/>